<dbReference type="EMBL" id="CP000361">
    <property type="protein sequence ID" value="ABV66379.1"/>
    <property type="molecule type" value="Genomic_DNA"/>
</dbReference>
<dbReference type="RefSeq" id="WP_004510140.1">
    <property type="nucleotide sequence ID" value="NC_009850.1"/>
</dbReference>
<dbReference type="SMR" id="A8ER05"/>
<dbReference type="STRING" id="367737.Abu_0094"/>
<dbReference type="GeneID" id="24304646"/>
<dbReference type="KEGG" id="abu:Abu_0094"/>
<dbReference type="eggNOG" id="COG0102">
    <property type="taxonomic scope" value="Bacteria"/>
</dbReference>
<dbReference type="HOGENOM" id="CLU_082184_2_2_7"/>
<dbReference type="Proteomes" id="UP000001136">
    <property type="component" value="Chromosome"/>
</dbReference>
<dbReference type="GO" id="GO:0022625">
    <property type="term" value="C:cytosolic large ribosomal subunit"/>
    <property type="evidence" value="ECO:0007669"/>
    <property type="project" value="TreeGrafter"/>
</dbReference>
<dbReference type="GO" id="GO:0003729">
    <property type="term" value="F:mRNA binding"/>
    <property type="evidence" value="ECO:0007669"/>
    <property type="project" value="TreeGrafter"/>
</dbReference>
<dbReference type="GO" id="GO:0003735">
    <property type="term" value="F:structural constituent of ribosome"/>
    <property type="evidence" value="ECO:0007669"/>
    <property type="project" value="InterPro"/>
</dbReference>
<dbReference type="GO" id="GO:0017148">
    <property type="term" value="P:negative regulation of translation"/>
    <property type="evidence" value="ECO:0007669"/>
    <property type="project" value="TreeGrafter"/>
</dbReference>
<dbReference type="GO" id="GO:0006412">
    <property type="term" value="P:translation"/>
    <property type="evidence" value="ECO:0007669"/>
    <property type="project" value="UniProtKB-UniRule"/>
</dbReference>
<dbReference type="CDD" id="cd00392">
    <property type="entry name" value="Ribosomal_L13"/>
    <property type="match status" value="1"/>
</dbReference>
<dbReference type="Gene3D" id="3.90.1180.10">
    <property type="entry name" value="Ribosomal protein L13"/>
    <property type="match status" value="1"/>
</dbReference>
<dbReference type="HAMAP" id="MF_01366">
    <property type="entry name" value="Ribosomal_uL13"/>
    <property type="match status" value="1"/>
</dbReference>
<dbReference type="InterPro" id="IPR005822">
    <property type="entry name" value="Ribosomal_uL13"/>
</dbReference>
<dbReference type="InterPro" id="IPR005823">
    <property type="entry name" value="Ribosomal_uL13_bac-type"/>
</dbReference>
<dbReference type="InterPro" id="IPR036899">
    <property type="entry name" value="Ribosomal_uL13_sf"/>
</dbReference>
<dbReference type="NCBIfam" id="TIGR01066">
    <property type="entry name" value="rplM_bact"/>
    <property type="match status" value="1"/>
</dbReference>
<dbReference type="PANTHER" id="PTHR11545:SF2">
    <property type="entry name" value="LARGE RIBOSOMAL SUBUNIT PROTEIN UL13M"/>
    <property type="match status" value="1"/>
</dbReference>
<dbReference type="PANTHER" id="PTHR11545">
    <property type="entry name" value="RIBOSOMAL PROTEIN L13"/>
    <property type="match status" value="1"/>
</dbReference>
<dbReference type="Pfam" id="PF00572">
    <property type="entry name" value="Ribosomal_L13"/>
    <property type="match status" value="1"/>
</dbReference>
<dbReference type="PIRSF" id="PIRSF002181">
    <property type="entry name" value="Ribosomal_L13"/>
    <property type="match status" value="1"/>
</dbReference>
<dbReference type="SUPFAM" id="SSF52161">
    <property type="entry name" value="Ribosomal protein L13"/>
    <property type="match status" value="1"/>
</dbReference>
<protein>
    <recommendedName>
        <fullName evidence="1">Large ribosomal subunit protein uL13</fullName>
    </recommendedName>
    <alternativeName>
        <fullName evidence="2">50S ribosomal protein L13</fullName>
    </alternativeName>
</protein>
<gene>
    <name evidence="1" type="primary">rplM</name>
    <name type="ordered locus">Abu_0094</name>
</gene>
<comment type="function">
    <text evidence="1">This protein is one of the early assembly proteins of the 50S ribosomal subunit, although it is not seen to bind rRNA by itself. It is important during the early stages of 50S assembly.</text>
</comment>
<comment type="subunit">
    <text evidence="1">Part of the 50S ribosomal subunit.</text>
</comment>
<comment type="similarity">
    <text evidence="1">Belongs to the universal ribosomal protein uL13 family.</text>
</comment>
<name>RL13_ALIB4</name>
<evidence type="ECO:0000255" key="1">
    <source>
        <dbReference type="HAMAP-Rule" id="MF_01366"/>
    </source>
</evidence>
<evidence type="ECO:0000305" key="2"/>
<reference key="1">
    <citation type="journal article" date="2007" name="PLoS ONE">
        <title>The complete genome sequence and analysis of the Epsilonproteobacterium Arcobacter butzleri.</title>
        <authorList>
            <person name="Miller W.G."/>
            <person name="Parker C.T."/>
            <person name="Rubenfield M."/>
            <person name="Mendz G.L."/>
            <person name="Woesten M.M.S.M."/>
            <person name="Ussery D.W."/>
            <person name="Stolz J.F."/>
            <person name="Binnewies T.T."/>
            <person name="Hallin P.F."/>
            <person name="Wang G."/>
            <person name="Malek J.A."/>
            <person name="Rogosin A."/>
            <person name="Stanker L.H."/>
            <person name="Mandrell R.E."/>
        </authorList>
    </citation>
    <scope>NUCLEOTIDE SEQUENCE [LARGE SCALE GENOMIC DNA]</scope>
    <source>
        <strain>RM4018</strain>
    </source>
</reference>
<proteinExistence type="inferred from homology"/>
<accession>A8ER05</accession>
<feature type="chain" id="PRO_1000067988" description="Large ribosomal subunit protein uL13">
    <location>
        <begin position="1"/>
        <end position="139"/>
    </location>
</feature>
<keyword id="KW-1185">Reference proteome</keyword>
<keyword id="KW-0687">Ribonucleoprotein</keyword>
<keyword id="KW-0689">Ribosomal protein</keyword>
<organism>
    <name type="scientific">Aliarcobacter butzleri (strain RM4018)</name>
    <name type="common">Arcobacter butzleri</name>
    <dbReference type="NCBI Taxonomy" id="367737"/>
    <lineage>
        <taxon>Bacteria</taxon>
        <taxon>Pseudomonadati</taxon>
        <taxon>Campylobacterota</taxon>
        <taxon>Epsilonproteobacteria</taxon>
        <taxon>Campylobacterales</taxon>
        <taxon>Arcobacteraceae</taxon>
        <taxon>Aliarcobacter</taxon>
    </lineage>
</organism>
<sequence>MKFTQMAHANEIKRDWIVVDATDKVFGRIITEVATILRGKNKPCFTPNVDCGDFVVIINASKAKFSGKKLESKNYFTHSGYFGSTKTHKMSEMFEKNPEKLYKLATRGMLPKTTLGKEMLKKLKVYAGSEHPHTAQIKG</sequence>